<feature type="chain" id="PRO_0000318637" description="Type I iodothyronine deiodinase">
    <location>
        <begin position="1"/>
        <end position="252"/>
    </location>
</feature>
<feature type="topological domain" description="Extracellular" evidence="1">
    <location>
        <begin position="1"/>
        <end position="17"/>
    </location>
</feature>
<feature type="transmembrane region" description="Helical; Signal-anchor for type III membrane protein" evidence="4">
    <location>
        <begin position="18"/>
        <end position="38"/>
    </location>
</feature>
<feature type="topological domain" description="Cytoplasmic" evidence="1">
    <location>
        <begin position="39"/>
        <end position="252"/>
    </location>
</feature>
<feature type="active site" evidence="1">
    <location>
        <position position="130"/>
    </location>
</feature>
<feature type="non-standard amino acid" description="Selenocysteine" evidence="1">
    <location>
        <position position="130"/>
    </location>
</feature>
<feature type="mutagenesis site" description="Increased outer-ring deiodination activity with T4 and rT3 and high sensitivity to 6-n-propylthiouracil." evidence="6">
    <original>P</original>
    <variation>S</variation>
    <location>
        <position position="132"/>
    </location>
</feature>
<name>IOD1_XENLA</name>
<evidence type="ECO:0000250" key="1">
    <source>
        <dbReference type="UniProtKB" id="P24389"/>
    </source>
</evidence>
<evidence type="ECO:0000250" key="2">
    <source>
        <dbReference type="UniProtKB" id="P49895"/>
    </source>
</evidence>
<evidence type="ECO:0000250" key="3">
    <source>
        <dbReference type="UniProtKB" id="Q61153"/>
    </source>
</evidence>
<evidence type="ECO:0000255" key="4"/>
<evidence type="ECO:0000255" key="5">
    <source>
        <dbReference type="PROSITE-ProRule" id="PRU10107"/>
    </source>
</evidence>
<evidence type="ECO:0000269" key="6">
    <source>
    </source>
</evidence>
<evidence type="ECO:0000305" key="7"/>
<evidence type="ECO:0000305" key="8">
    <source>
    </source>
</evidence>
<proteinExistence type="evidence at protein level"/>
<protein>
    <recommendedName>
        <fullName>Type I iodothyronine deiodinase</fullName>
        <ecNumber evidence="6">1.21.99.3</ecNumber>
        <ecNumber evidence="6">1.21.99.4</ecNumber>
    </recommendedName>
    <alternativeName>
        <fullName>5DI</fullName>
    </alternativeName>
    <alternativeName>
        <fullName>DIOI</fullName>
    </alternativeName>
    <alternativeName>
        <fullName>Type 1 DI</fullName>
    </alternativeName>
    <alternativeName>
        <fullName>Type-I 5'-deiodinase</fullName>
    </alternativeName>
</protein>
<keyword id="KW-1003">Cell membrane</keyword>
<keyword id="KW-0256">Endoplasmic reticulum</keyword>
<keyword id="KW-0472">Membrane</keyword>
<keyword id="KW-0560">Oxidoreductase</keyword>
<keyword id="KW-1185">Reference proteome</keyword>
<keyword id="KW-0712">Selenocysteine</keyword>
<keyword id="KW-0893">Thyroid hormones biosynthesis</keyword>
<keyword id="KW-0812">Transmembrane</keyword>
<keyword id="KW-1133">Transmembrane helix</keyword>
<accession>Q2QEI3</accession>
<dbReference type="EC" id="1.21.99.3" evidence="6"/>
<dbReference type="EC" id="1.21.99.4" evidence="6"/>
<dbReference type="EMBL" id="DQ098656">
    <property type="protein sequence ID" value="AAZ43088.1"/>
    <property type="molecule type" value="mRNA"/>
</dbReference>
<dbReference type="RefSeq" id="NP_001089136.1">
    <property type="nucleotide sequence ID" value="NM_001095667.1"/>
</dbReference>
<dbReference type="GeneID" id="733447"/>
<dbReference type="KEGG" id="xla:733447"/>
<dbReference type="AGR" id="Xenbase:XB-GENE-979948"/>
<dbReference type="CTD" id="733447"/>
<dbReference type="Xenbase" id="XB-GENE-979948">
    <property type="gene designation" value="dio1.L"/>
</dbReference>
<dbReference type="OrthoDB" id="428577at2759"/>
<dbReference type="Proteomes" id="UP000186698">
    <property type="component" value="Chromosome 4L"/>
</dbReference>
<dbReference type="Bgee" id="733447">
    <property type="expression patterns" value="Expressed in zone of skin and 17 other cell types or tissues"/>
</dbReference>
<dbReference type="GO" id="GO:0016323">
    <property type="term" value="C:basolateral plasma membrane"/>
    <property type="evidence" value="ECO:0007669"/>
    <property type="project" value="UniProtKB-SubCell"/>
</dbReference>
<dbReference type="GO" id="GO:0005789">
    <property type="term" value="C:endoplasmic reticulum membrane"/>
    <property type="evidence" value="ECO:0007669"/>
    <property type="project" value="UniProtKB-SubCell"/>
</dbReference>
<dbReference type="GO" id="GO:0004800">
    <property type="term" value="F:thyroxine 5'-deiodinase activity"/>
    <property type="evidence" value="ECO:0000314"/>
    <property type="project" value="UniProtKB"/>
</dbReference>
<dbReference type="GO" id="GO:0033798">
    <property type="term" value="F:thyroxine 5-deiodinase activity"/>
    <property type="evidence" value="ECO:0000314"/>
    <property type="project" value="UniProtKB"/>
</dbReference>
<dbReference type="GO" id="GO:0042446">
    <property type="term" value="P:hormone biosynthetic process"/>
    <property type="evidence" value="ECO:0007669"/>
    <property type="project" value="UniProtKB-KW"/>
</dbReference>
<dbReference type="GO" id="GO:0042404">
    <property type="term" value="P:thyroid hormone catabolic process"/>
    <property type="evidence" value="ECO:0000314"/>
    <property type="project" value="UniProtKB"/>
</dbReference>
<dbReference type="GO" id="GO:0042403">
    <property type="term" value="P:thyroid hormone metabolic process"/>
    <property type="evidence" value="ECO:0000318"/>
    <property type="project" value="GO_Central"/>
</dbReference>
<dbReference type="FunFam" id="3.40.30.10:FF:000192">
    <property type="entry name" value="Iodothyronine deiodinase"/>
    <property type="match status" value="1"/>
</dbReference>
<dbReference type="Gene3D" id="3.40.30.10">
    <property type="entry name" value="Glutaredoxin"/>
    <property type="match status" value="1"/>
</dbReference>
<dbReference type="InterPro" id="IPR000643">
    <property type="entry name" value="Iodothyronine_deiodinase"/>
</dbReference>
<dbReference type="InterPro" id="IPR008261">
    <property type="entry name" value="Iodothyronine_deiodinase_AS"/>
</dbReference>
<dbReference type="InterPro" id="IPR036249">
    <property type="entry name" value="Thioredoxin-like_sf"/>
</dbReference>
<dbReference type="PANTHER" id="PTHR11781">
    <property type="entry name" value="IODOTHYRONINE DEIODINASE"/>
    <property type="match status" value="1"/>
</dbReference>
<dbReference type="PANTHER" id="PTHR11781:SF22">
    <property type="entry name" value="TYPE I IODOTHYRONINE DEIODINASE"/>
    <property type="match status" value="1"/>
</dbReference>
<dbReference type="Pfam" id="PF00837">
    <property type="entry name" value="T4_deiodinase"/>
    <property type="match status" value="1"/>
</dbReference>
<dbReference type="PIRSF" id="PIRSF001330">
    <property type="entry name" value="IOD"/>
    <property type="match status" value="1"/>
</dbReference>
<dbReference type="SUPFAM" id="SSF52833">
    <property type="entry name" value="Thioredoxin-like"/>
    <property type="match status" value="1"/>
</dbReference>
<dbReference type="PROSITE" id="PS01205">
    <property type="entry name" value="T4_DEIODINASE"/>
    <property type="match status" value="1"/>
</dbReference>
<organism>
    <name type="scientific">Xenopus laevis</name>
    <name type="common">African clawed frog</name>
    <dbReference type="NCBI Taxonomy" id="8355"/>
    <lineage>
        <taxon>Eukaryota</taxon>
        <taxon>Metazoa</taxon>
        <taxon>Chordata</taxon>
        <taxon>Craniata</taxon>
        <taxon>Vertebrata</taxon>
        <taxon>Euteleostomi</taxon>
        <taxon>Amphibia</taxon>
        <taxon>Batrachia</taxon>
        <taxon>Anura</taxon>
        <taxon>Pipoidea</taxon>
        <taxon>Pipidae</taxon>
        <taxon>Xenopodinae</taxon>
        <taxon>Xenopus</taxon>
        <taxon>Xenopus</taxon>
    </lineage>
</organism>
<sequence length="252" mass="29187">MESLLQTIKLMLRYIQKALILFFLFLYVVVGKVLMFLFPQTMASVLKSRFEISGVHDPKFQYEDWGPTFFTYKFLRSVLEIMWMRLEDEAFVGHSAPNTPVVDLSGELHHIWDYLQGTRPLVLSFGSCTUPPFLFRLGEFNKLVNEFNSIADFLIIYIDEAHAADEWALKNNLHIKKHRSLQDRLAAAKRLMEESPSCPVVLDTMSNLCSAKYAALPERLYILQEGKIIYKGKMGPWGYKPEEVCSVLEKKK</sequence>
<reference key="1">
    <citation type="journal article" date="2006" name="Endocrinology">
        <title>Characterization of recombinant Xenopus laevis type I iodothyronine deiodinase: substitution of a proline residue in the catalytic center by serine (Pro132Ser) restores sensitivity to 6-propyl-2-thiouracil.</title>
        <authorList>
            <person name="Kuiper G.G."/>
            <person name="Klootwijk W."/>
            <person name="Morvan Dubois G."/>
            <person name="Destree O."/>
            <person name="Darras V.M."/>
            <person name="Van der Geyten S."/>
            <person name="Demeneix B."/>
            <person name="Visser T.J."/>
        </authorList>
    </citation>
    <scope>NUCLEOTIDE SEQUENCE [MRNA]</scope>
    <scope>FUNCTION</scope>
    <scope>CATALYTIC ACTIVITY</scope>
    <scope>BIOPHYSICOCHEMICAL PROPERTIES</scope>
    <scope>ACTIVITY REGULATION</scope>
    <scope>MUTAGENESIS OF PRO-132</scope>
</reference>
<comment type="function">
    <text evidence="1 2 3 6">Plays a crucial role in the metabolism of thyroid hormones (TH) and has specific roles in TH activation and inactivation by deiodination (PubMed:16601143). Catalyzes the deiodination of L-thyroxine (T4) to 3,5,3'-triiodothyronine (T3) and 3,3',5'-triiodothyronine (rT3) to 3,3'-diiodothyronine (3,3'-T2) via outer-ring deiodination (ORD) (PubMed:16601143). Catalyzes the deiodiantion of T4 to rT3 and T3 to 3,3'-T2 via inner-ring deiodination (IRD) (PubMed:16601143). Catalyzes the deiodination of 3',5'-diiodothyronine (3',5'-T2) to 3'-monoiodothyronine (3'-T1) via ORD (By similarity). Catalyzes the deiodination of 3,5-diiodothyronine (3,5-T2) to 3-monoiodothyronine (3-T1) and 3,3'-T2 to 3-T1 via IRD (By similarity). Catalyzes the phenolic ring deiodinations of 3,3',5'-triiodothyronamine, 3',5'-diiodothyronamine and 3,3'-diiodothyronamine as well as tyrosyl ring deiodinations of 3,5,3'-triiodothyronamine and 3,5-diiodothyronamine (By similarity). Catalyzes the deiodination of L-thyroxine sulfate and 3,3',5-triiodo-L-thyronine sulfate via IRD and of 3,3',5'-triiodo-L-thyronine sulfate via ORD (By similarity).</text>
</comment>
<comment type="catalytic activity">
    <reaction evidence="5 6">
        <text>3,3',5-triiodo-L-thyronine + iodide + A + H(+) = L-thyroxine + AH2</text>
        <dbReference type="Rhea" id="RHEA:19745"/>
        <dbReference type="ChEBI" id="CHEBI:13193"/>
        <dbReference type="ChEBI" id="CHEBI:15378"/>
        <dbReference type="ChEBI" id="CHEBI:16382"/>
        <dbReference type="ChEBI" id="CHEBI:17499"/>
        <dbReference type="ChEBI" id="CHEBI:58448"/>
        <dbReference type="ChEBI" id="CHEBI:533015"/>
        <dbReference type="EC" id="1.21.99.4"/>
    </reaction>
    <physiologicalReaction direction="right-to-left" evidence="8">
        <dbReference type="Rhea" id="RHEA:19747"/>
    </physiologicalReaction>
</comment>
<comment type="catalytic activity">
    <reaction evidence="6">
        <text>3,3',5'-triiodo-L-thyronine + iodide + A + H(+) = L-thyroxine + AH2</text>
        <dbReference type="Rhea" id="RHEA:18897"/>
        <dbReference type="ChEBI" id="CHEBI:13193"/>
        <dbReference type="ChEBI" id="CHEBI:15378"/>
        <dbReference type="ChEBI" id="CHEBI:16382"/>
        <dbReference type="ChEBI" id="CHEBI:17499"/>
        <dbReference type="ChEBI" id="CHEBI:57261"/>
        <dbReference type="ChEBI" id="CHEBI:58448"/>
        <dbReference type="EC" id="1.21.99.3"/>
    </reaction>
    <physiologicalReaction direction="right-to-left" evidence="8">
        <dbReference type="Rhea" id="RHEA:18899"/>
    </physiologicalReaction>
</comment>
<comment type="catalytic activity">
    <reaction evidence="6">
        <text>3,3'-diiodo-L-thyronine + iodide + A + H(+) = 3,3',5'-triiodo-L-thyronine + AH2</text>
        <dbReference type="Rhea" id="RHEA:82575"/>
        <dbReference type="ChEBI" id="CHEBI:13193"/>
        <dbReference type="ChEBI" id="CHEBI:15378"/>
        <dbReference type="ChEBI" id="CHEBI:16382"/>
        <dbReference type="ChEBI" id="CHEBI:17499"/>
        <dbReference type="ChEBI" id="CHEBI:57261"/>
        <dbReference type="ChEBI" id="CHEBI:176514"/>
    </reaction>
    <physiologicalReaction direction="right-to-left" evidence="8">
        <dbReference type="Rhea" id="RHEA:82577"/>
    </physiologicalReaction>
</comment>
<comment type="catalytic activity">
    <reaction evidence="6">
        <text>3,3'-diiodo-L-thyronine + iodide + A + H(+) = 3,3',5-triiodo-L-thyronine + AH2</text>
        <dbReference type="Rhea" id="RHEA:82571"/>
        <dbReference type="ChEBI" id="CHEBI:13193"/>
        <dbReference type="ChEBI" id="CHEBI:15378"/>
        <dbReference type="ChEBI" id="CHEBI:16382"/>
        <dbReference type="ChEBI" id="CHEBI:17499"/>
        <dbReference type="ChEBI" id="CHEBI:176514"/>
        <dbReference type="ChEBI" id="CHEBI:533015"/>
    </reaction>
    <physiologicalReaction direction="right-to-left" evidence="8">
        <dbReference type="Rhea" id="RHEA:82573"/>
    </physiologicalReaction>
</comment>
<comment type="catalytic activity">
    <reaction evidence="2">
        <text>3'-iodo-L-thyronine + iodide + A + H(+) = 3',5'-diiodo-L-thyronine + AH2</text>
        <dbReference type="Rhea" id="RHEA:82899"/>
        <dbReference type="ChEBI" id="CHEBI:13193"/>
        <dbReference type="ChEBI" id="CHEBI:15378"/>
        <dbReference type="ChEBI" id="CHEBI:16382"/>
        <dbReference type="ChEBI" id="CHEBI:17499"/>
        <dbReference type="ChEBI" id="CHEBI:195762"/>
        <dbReference type="ChEBI" id="CHEBI:232695"/>
    </reaction>
    <physiologicalReaction direction="right-to-left" evidence="2">
        <dbReference type="Rhea" id="RHEA:82901"/>
    </physiologicalReaction>
</comment>
<comment type="catalytic activity">
    <reaction evidence="3">
        <text>3-iodo-L-thyronine + iodide + A + H(+) = 3,5-diiodo-L-thyronine + AH2</text>
        <dbReference type="Rhea" id="RHEA:82895"/>
        <dbReference type="ChEBI" id="CHEBI:13193"/>
        <dbReference type="ChEBI" id="CHEBI:15378"/>
        <dbReference type="ChEBI" id="CHEBI:16382"/>
        <dbReference type="ChEBI" id="CHEBI:17499"/>
        <dbReference type="ChEBI" id="CHEBI:232626"/>
        <dbReference type="ChEBI" id="CHEBI:232627"/>
    </reaction>
    <physiologicalReaction direction="right-to-left" evidence="3">
        <dbReference type="Rhea" id="RHEA:82897"/>
    </physiologicalReaction>
</comment>
<comment type="catalytic activity">
    <reaction evidence="3">
        <text>3-iodo-L-thyronine + iodide + A + H(+) = 3,3'-diiodo-L-thyronine + AH2</text>
        <dbReference type="Rhea" id="RHEA:83783"/>
        <dbReference type="ChEBI" id="CHEBI:13193"/>
        <dbReference type="ChEBI" id="CHEBI:15378"/>
        <dbReference type="ChEBI" id="CHEBI:16382"/>
        <dbReference type="ChEBI" id="CHEBI:17499"/>
        <dbReference type="ChEBI" id="CHEBI:176514"/>
        <dbReference type="ChEBI" id="CHEBI:232627"/>
    </reaction>
    <physiologicalReaction direction="right-to-left" evidence="3">
        <dbReference type="Rhea" id="RHEA:83785"/>
    </physiologicalReaction>
</comment>
<comment type="catalytic activity">
    <reaction evidence="3">
        <text>3,3'-diiodothyronamine + iodide + A + H(+) = 3,3',5'-triiodothyronamine + AH2</text>
        <dbReference type="Rhea" id="RHEA:83795"/>
        <dbReference type="ChEBI" id="CHEBI:13193"/>
        <dbReference type="ChEBI" id="CHEBI:15378"/>
        <dbReference type="ChEBI" id="CHEBI:16382"/>
        <dbReference type="ChEBI" id="CHEBI:17499"/>
        <dbReference type="ChEBI" id="CHEBI:233341"/>
        <dbReference type="ChEBI" id="CHEBI:233343"/>
    </reaction>
    <physiologicalReaction direction="right-to-left" evidence="3">
        <dbReference type="Rhea" id="RHEA:83797"/>
    </physiologicalReaction>
</comment>
<comment type="catalytic activity">
    <reaction evidence="3">
        <text>3'-iodothyronamine + iodide + A + H(+) = 3',5'-diiodothyronamine + AH2</text>
        <dbReference type="Rhea" id="RHEA:83803"/>
        <dbReference type="ChEBI" id="CHEBI:13193"/>
        <dbReference type="ChEBI" id="CHEBI:15378"/>
        <dbReference type="ChEBI" id="CHEBI:16382"/>
        <dbReference type="ChEBI" id="CHEBI:17499"/>
        <dbReference type="ChEBI" id="CHEBI:233339"/>
        <dbReference type="ChEBI" id="CHEBI:233342"/>
    </reaction>
    <physiologicalReaction direction="right-to-left" evidence="3">
        <dbReference type="Rhea" id="RHEA:83805"/>
    </physiologicalReaction>
</comment>
<comment type="catalytic activity">
    <reaction evidence="3">
        <text>3-iodothyronamine + iodide + A + H(+) = 3,3'-diiodothyronamine + AH2</text>
        <dbReference type="Rhea" id="RHEA:83827"/>
        <dbReference type="ChEBI" id="CHEBI:13193"/>
        <dbReference type="ChEBI" id="CHEBI:15378"/>
        <dbReference type="ChEBI" id="CHEBI:16382"/>
        <dbReference type="ChEBI" id="CHEBI:17499"/>
        <dbReference type="ChEBI" id="CHEBI:231647"/>
        <dbReference type="ChEBI" id="CHEBI:233341"/>
    </reaction>
    <physiologicalReaction direction="right-to-left" evidence="3">
        <dbReference type="Rhea" id="RHEA:83829"/>
    </physiologicalReaction>
</comment>
<comment type="catalytic activity">
    <reaction evidence="3">
        <text>3,3'-diiodothyronamine + iodide + A + H(+) = 3,3',5-triiodothyronamine + AH2</text>
        <dbReference type="Rhea" id="RHEA:83811"/>
        <dbReference type="ChEBI" id="CHEBI:13193"/>
        <dbReference type="ChEBI" id="CHEBI:15378"/>
        <dbReference type="ChEBI" id="CHEBI:16382"/>
        <dbReference type="ChEBI" id="CHEBI:17499"/>
        <dbReference type="ChEBI" id="CHEBI:233341"/>
        <dbReference type="ChEBI" id="CHEBI:233426"/>
    </reaction>
    <physiologicalReaction direction="right-to-left" evidence="3">
        <dbReference type="Rhea" id="RHEA:83813"/>
    </physiologicalReaction>
</comment>
<comment type="catalytic activity">
    <reaction evidence="3">
        <text>3-iodothyronamine + iodide + A + H(+) = 3,5-diiodothyronamine + AH2</text>
        <dbReference type="Rhea" id="RHEA:83823"/>
        <dbReference type="ChEBI" id="CHEBI:13193"/>
        <dbReference type="ChEBI" id="CHEBI:15378"/>
        <dbReference type="ChEBI" id="CHEBI:16382"/>
        <dbReference type="ChEBI" id="CHEBI:17499"/>
        <dbReference type="ChEBI" id="CHEBI:231647"/>
        <dbReference type="ChEBI" id="CHEBI:233340"/>
    </reaction>
    <physiologicalReaction direction="right-to-left" evidence="3">
        <dbReference type="Rhea" id="RHEA:83825"/>
    </physiologicalReaction>
</comment>
<comment type="catalytic activity">
    <reaction evidence="1">
        <text>3,3'-diiodo-L-thyronine sulfate + iodide + A + H(+) = 3,3',5'-triiodo-L-thyronine sulfate + AH2</text>
        <dbReference type="Rhea" id="RHEA:83831"/>
        <dbReference type="ChEBI" id="CHEBI:13193"/>
        <dbReference type="ChEBI" id="CHEBI:15378"/>
        <dbReference type="ChEBI" id="CHEBI:16382"/>
        <dbReference type="ChEBI" id="CHEBI:17499"/>
        <dbReference type="ChEBI" id="CHEBI:176513"/>
        <dbReference type="ChEBI" id="CHEBI:176515"/>
    </reaction>
    <physiologicalReaction direction="right-to-left" evidence="1">
        <dbReference type="Rhea" id="RHEA:83833"/>
    </physiologicalReaction>
</comment>
<comment type="catalytic activity">
    <reaction evidence="1">
        <text>3,3',5'-triiodo-L-thyronine sulfate + iodide + A + H(+) = L-thyroxine sulfate + AH2</text>
        <dbReference type="Rhea" id="RHEA:83835"/>
        <dbReference type="ChEBI" id="CHEBI:13193"/>
        <dbReference type="ChEBI" id="CHEBI:15378"/>
        <dbReference type="ChEBI" id="CHEBI:16382"/>
        <dbReference type="ChEBI" id="CHEBI:17499"/>
        <dbReference type="ChEBI" id="CHEBI:176512"/>
        <dbReference type="ChEBI" id="CHEBI:176513"/>
    </reaction>
    <physiologicalReaction direction="right-to-left" evidence="1">
        <dbReference type="Rhea" id="RHEA:83837"/>
    </physiologicalReaction>
</comment>
<comment type="catalytic activity">
    <reaction evidence="1">
        <text>3,3'-diiodo-L-thyronine sulfate + iodide + A + H(+) = 3,3',5-triiodo-L-thyronine sulfate + AH2</text>
        <dbReference type="Rhea" id="RHEA:83751"/>
        <dbReference type="ChEBI" id="CHEBI:13193"/>
        <dbReference type="ChEBI" id="CHEBI:15378"/>
        <dbReference type="ChEBI" id="CHEBI:16382"/>
        <dbReference type="ChEBI" id="CHEBI:17499"/>
        <dbReference type="ChEBI" id="CHEBI:176511"/>
        <dbReference type="ChEBI" id="CHEBI:176515"/>
    </reaction>
    <physiologicalReaction direction="right-to-left" evidence="1">
        <dbReference type="Rhea" id="RHEA:83753"/>
    </physiologicalReaction>
</comment>
<comment type="activity regulation">
    <text evidence="6">Lacks sensitivity to 6-n-propylthiouracil.</text>
</comment>
<comment type="biophysicochemical properties">
    <kinetics>
        <KM evidence="6">0.27 uM for L-thyroxine (outer-ring deiodination activity)</KM>
        <KM evidence="6">0.35 uM for L-thyroxine (inner-ring deiodination activity)</KM>
        <KM evidence="6">0.36 uM for 3,3',5'-triiodo-L-thyronine (outer-ring deiodination activity)</KM>
        <KM evidence="6">0.78 uM for 3,3',5-triiodo-L-thyronine (inner-ring deiodination activity)</KM>
        <Vmax evidence="6">7.8 pmol/min/mg enzyme towards L-thyroxine (outer-ring deiodination activity)</Vmax>
        <Vmax evidence="6">4.9 pmol/min/mg enzyme towards L-thyroxine (inner-ring deiodination activity)</Vmax>
        <Vmax evidence="6">9.3 pmol/min/mg enzyme towards 3,3',5'-triiodo-L-thyronine (outer-ring deiodination activity)</Vmax>
        <Vmax evidence="6">3.2 pmol/min/mg enzyme towards 3,3',5-triiodo-L-thyronine (inner-ring deiodination activity)</Vmax>
    </kinetics>
</comment>
<comment type="subunit">
    <text evidence="2">Predominantly monomer. Can form homodimers but homodimerization is not essential for enzyme activity.</text>
</comment>
<comment type="subcellular location">
    <subcellularLocation>
        <location evidence="1">Cell membrane</location>
        <topology evidence="1">Single-pass type III membrane protein</topology>
    </subcellularLocation>
    <subcellularLocation>
        <location evidence="1">Endoplasmic reticulum membrane</location>
        <topology evidence="1">Single-pass type III membrane protein</topology>
    </subcellularLocation>
    <subcellularLocation>
        <location evidence="1">Basolateral cell membrane</location>
        <topology evidence="1">Single-pass type III membrane protein</topology>
    </subcellularLocation>
</comment>
<comment type="similarity">
    <text evidence="7">Belongs to the iodothyronine deiodinase family.</text>
</comment>
<gene>
    <name type="primary">dio1</name>
</gene>